<dbReference type="EMBL" id="CP000764">
    <property type="protein sequence ID" value="ABS20497.1"/>
    <property type="molecule type" value="Genomic_DNA"/>
</dbReference>
<dbReference type="RefSeq" id="WP_011983262.1">
    <property type="nucleotide sequence ID" value="NC_009674.1"/>
</dbReference>
<dbReference type="SMR" id="A7GK39"/>
<dbReference type="STRING" id="315749.Bcer98_0123"/>
<dbReference type="GeneID" id="33895444"/>
<dbReference type="KEGG" id="bcy:Bcer98_0123"/>
<dbReference type="eggNOG" id="COG0200">
    <property type="taxonomic scope" value="Bacteria"/>
</dbReference>
<dbReference type="HOGENOM" id="CLU_055188_4_2_9"/>
<dbReference type="OrthoDB" id="9810293at2"/>
<dbReference type="Proteomes" id="UP000002300">
    <property type="component" value="Chromosome"/>
</dbReference>
<dbReference type="GO" id="GO:0022625">
    <property type="term" value="C:cytosolic large ribosomal subunit"/>
    <property type="evidence" value="ECO:0007669"/>
    <property type="project" value="TreeGrafter"/>
</dbReference>
<dbReference type="GO" id="GO:0019843">
    <property type="term" value="F:rRNA binding"/>
    <property type="evidence" value="ECO:0007669"/>
    <property type="project" value="UniProtKB-UniRule"/>
</dbReference>
<dbReference type="GO" id="GO:0003735">
    <property type="term" value="F:structural constituent of ribosome"/>
    <property type="evidence" value="ECO:0007669"/>
    <property type="project" value="InterPro"/>
</dbReference>
<dbReference type="GO" id="GO:0006412">
    <property type="term" value="P:translation"/>
    <property type="evidence" value="ECO:0007669"/>
    <property type="project" value="UniProtKB-UniRule"/>
</dbReference>
<dbReference type="FunFam" id="3.100.10.10:FF:000004">
    <property type="entry name" value="50S ribosomal protein L15"/>
    <property type="match status" value="1"/>
</dbReference>
<dbReference type="Gene3D" id="3.100.10.10">
    <property type="match status" value="1"/>
</dbReference>
<dbReference type="HAMAP" id="MF_01341">
    <property type="entry name" value="Ribosomal_uL15"/>
    <property type="match status" value="1"/>
</dbReference>
<dbReference type="InterPro" id="IPR030878">
    <property type="entry name" value="Ribosomal_uL15"/>
</dbReference>
<dbReference type="InterPro" id="IPR021131">
    <property type="entry name" value="Ribosomal_uL15/eL18"/>
</dbReference>
<dbReference type="InterPro" id="IPR036227">
    <property type="entry name" value="Ribosomal_uL15/eL18_sf"/>
</dbReference>
<dbReference type="InterPro" id="IPR005749">
    <property type="entry name" value="Ribosomal_uL15_bac-type"/>
</dbReference>
<dbReference type="InterPro" id="IPR001196">
    <property type="entry name" value="Ribosomal_uL15_CS"/>
</dbReference>
<dbReference type="NCBIfam" id="TIGR01071">
    <property type="entry name" value="rplO_bact"/>
    <property type="match status" value="1"/>
</dbReference>
<dbReference type="PANTHER" id="PTHR12934">
    <property type="entry name" value="50S RIBOSOMAL PROTEIN L15"/>
    <property type="match status" value="1"/>
</dbReference>
<dbReference type="PANTHER" id="PTHR12934:SF11">
    <property type="entry name" value="LARGE RIBOSOMAL SUBUNIT PROTEIN UL15M"/>
    <property type="match status" value="1"/>
</dbReference>
<dbReference type="Pfam" id="PF00828">
    <property type="entry name" value="Ribosomal_L27A"/>
    <property type="match status" value="1"/>
</dbReference>
<dbReference type="SUPFAM" id="SSF52080">
    <property type="entry name" value="Ribosomal proteins L15p and L18e"/>
    <property type="match status" value="1"/>
</dbReference>
<dbReference type="PROSITE" id="PS00475">
    <property type="entry name" value="RIBOSOMAL_L15"/>
    <property type="match status" value="1"/>
</dbReference>
<keyword id="KW-0687">Ribonucleoprotein</keyword>
<keyword id="KW-0689">Ribosomal protein</keyword>
<keyword id="KW-0694">RNA-binding</keyword>
<keyword id="KW-0699">rRNA-binding</keyword>
<comment type="function">
    <text evidence="1">Binds to the 23S rRNA.</text>
</comment>
<comment type="subunit">
    <text evidence="1">Part of the 50S ribosomal subunit.</text>
</comment>
<comment type="similarity">
    <text evidence="1">Belongs to the universal ribosomal protein uL15 family.</text>
</comment>
<gene>
    <name evidence="1" type="primary">rplO</name>
    <name type="ordered locus">Bcer98_0123</name>
</gene>
<sequence length="146" mass="15446">MKLHELKPAEGSRKVRNRVGRGIGSGNGKTAGKGHKGQNARSGGGVRLGFEGGQTPLFRRLPKRGFTNINRKEFAIVNLAALNRFEDGTEVTPELLLETGVISKLNDGVKVLASGAVEKKLTVKAHKFSSSAKEAIEAAGGTVEVI</sequence>
<feature type="chain" id="PRO_1000086699" description="Large ribosomal subunit protein uL15">
    <location>
        <begin position="1"/>
        <end position="146"/>
    </location>
</feature>
<feature type="region of interest" description="Disordered" evidence="2">
    <location>
        <begin position="1"/>
        <end position="48"/>
    </location>
</feature>
<feature type="compositionally biased region" description="Basic and acidic residues" evidence="2">
    <location>
        <begin position="1"/>
        <end position="13"/>
    </location>
</feature>
<feature type="compositionally biased region" description="Gly residues" evidence="2">
    <location>
        <begin position="21"/>
        <end position="31"/>
    </location>
</feature>
<organism>
    <name type="scientific">Bacillus cytotoxicus (strain DSM 22905 / CIP 110041 / 391-98 / NVH 391-98)</name>
    <dbReference type="NCBI Taxonomy" id="315749"/>
    <lineage>
        <taxon>Bacteria</taxon>
        <taxon>Bacillati</taxon>
        <taxon>Bacillota</taxon>
        <taxon>Bacilli</taxon>
        <taxon>Bacillales</taxon>
        <taxon>Bacillaceae</taxon>
        <taxon>Bacillus</taxon>
        <taxon>Bacillus cereus group</taxon>
    </lineage>
</organism>
<name>RL15_BACCN</name>
<evidence type="ECO:0000255" key="1">
    <source>
        <dbReference type="HAMAP-Rule" id="MF_01341"/>
    </source>
</evidence>
<evidence type="ECO:0000256" key="2">
    <source>
        <dbReference type="SAM" id="MobiDB-lite"/>
    </source>
</evidence>
<evidence type="ECO:0000305" key="3"/>
<protein>
    <recommendedName>
        <fullName evidence="1">Large ribosomal subunit protein uL15</fullName>
    </recommendedName>
    <alternativeName>
        <fullName evidence="3">50S ribosomal protein L15</fullName>
    </alternativeName>
</protein>
<accession>A7GK39</accession>
<proteinExistence type="inferred from homology"/>
<reference key="1">
    <citation type="journal article" date="2008" name="Chem. Biol. Interact.">
        <title>Extending the Bacillus cereus group genomics to putative food-borne pathogens of different toxicity.</title>
        <authorList>
            <person name="Lapidus A."/>
            <person name="Goltsman E."/>
            <person name="Auger S."/>
            <person name="Galleron N."/>
            <person name="Segurens B."/>
            <person name="Dossat C."/>
            <person name="Land M.L."/>
            <person name="Broussolle V."/>
            <person name="Brillard J."/>
            <person name="Guinebretiere M.-H."/>
            <person name="Sanchis V."/>
            <person name="Nguen-the C."/>
            <person name="Lereclus D."/>
            <person name="Richardson P."/>
            <person name="Wincker P."/>
            <person name="Weissenbach J."/>
            <person name="Ehrlich S.D."/>
            <person name="Sorokin A."/>
        </authorList>
    </citation>
    <scope>NUCLEOTIDE SEQUENCE [LARGE SCALE GENOMIC DNA]</scope>
    <source>
        <strain>DSM 22905 / CIP 110041 / 391-98 / NVH 391-98</strain>
    </source>
</reference>